<keyword id="KW-0030">Aminoacyl-tRNA synthetase</keyword>
<keyword id="KW-0067">ATP-binding</keyword>
<keyword id="KW-0963">Cytoplasm</keyword>
<keyword id="KW-0436">Ligase</keyword>
<keyword id="KW-0479">Metal-binding</keyword>
<keyword id="KW-0547">Nucleotide-binding</keyword>
<keyword id="KW-0597">Phosphoprotein</keyword>
<keyword id="KW-0648">Protein biosynthesis</keyword>
<keyword id="KW-0862">Zinc</keyword>
<proteinExistence type="inferred from homology"/>
<name>SYC_BACC4</name>
<protein>
    <recommendedName>
        <fullName evidence="1">Cysteine--tRNA ligase</fullName>
        <ecNumber evidence="1">6.1.1.16</ecNumber>
    </recommendedName>
    <alternativeName>
        <fullName evidence="1">Cysteinyl-tRNA synthetase</fullName>
        <shortName evidence="1">CysRS</shortName>
    </alternativeName>
</protein>
<dbReference type="EC" id="6.1.1.16" evidence="1"/>
<dbReference type="EMBL" id="CP001176">
    <property type="protein sequence ID" value="ACK63332.1"/>
    <property type="molecule type" value="Genomic_DNA"/>
</dbReference>
<dbReference type="RefSeq" id="WP_000152276.1">
    <property type="nucleotide sequence ID" value="NZ_VEHB01000017.1"/>
</dbReference>
<dbReference type="SMR" id="B7HJ28"/>
<dbReference type="KEGG" id="bcb:BCB4264_A0110"/>
<dbReference type="HOGENOM" id="CLU_013528_0_1_9"/>
<dbReference type="Proteomes" id="UP000007096">
    <property type="component" value="Chromosome"/>
</dbReference>
<dbReference type="GO" id="GO:0005829">
    <property type="term" value="C:cytosol"/>
    <property type="evidence" value="ECO:0007669"/>
    <property type="project" value="TreeGrafter"/>
</dbReference>
<dbReference type="GO" id="GO:0005524">
    <property type="term" value="F:ATP binding"/>
    <property type="evidence" value="ECO:0007669"/>
    <property type="project" value="UniProtKB-UniRule"/>
</dbReference>
<dbReference type="GO" id="GO:0004817">
    <property type="term" value="F:cysteine-tRNA ligase activity"/>
    <property type="evidence" value="ECO:0007669"/>
    <property type="project" value="UniProtKB-UniRule"/>
</dbReference>
<dbReference type="GO" id="GO:0008270">
    <property type="term" value="F:zinc ion binding"/>
    <property type="evidence" value="ECO:0007669"/>
    <property type="project" value="UniProtKB-UniRule"/>
</dbReference>
<dbReference type="GO" id="GO:0006423">
    <property type="term" value="P:cysteinyl-tRNA aminoacylation"/>
    <property type="evidence" value="ECO:0007669"/>
    <property type="project" value="UniProtKB-UniRule"/>
</dbReference>
<dbReference type="CDD" id="cd00672">
    <property type="entry name" value="CysRS_core"/>
    <property type="match status" value="1"/>
</dbReference>
<dbReference type="FunFam" id="1.20.120.1910:FF:000002">
    <property type="entry name" value="Cysteine--tRNA ligase"/>
    <property type="match status" value="1"/>
</dbReference>
<dbReference type="FunFam" id="3.40.50.620:FF:000009">
    <property type="entry name" value="Cysteine--tRNA ligase"/>
    <property type="match status" value="1"/>
</dbReference>
<dbReference type="Gene3D" id="1.20.120.1910">
    <property type="entry name" value="Cysteine-tRNA ligase, C-terminal anti-codon recognition domain"/>
    <property type="match status" value="1"/>
</dbReference>
<dbReference type="Gene3D" id="3.40.50.620">
    <property type="entry name" value="HUPs"/>
    <property type="match status" value="1"/>
</dbReference>
<dbReference type="HAMAP" id="MF_00041">
    <property type="entry name" value="Cys_tRNA_synth"/>
    <property type="match status" value="1"/>
</dbReference>
<dbReference type="InterPro" id="IPR015803">
    <property type="entry name" value="Cys-tRNA-ligase"/>
</dbReference>
<dbReference type="InterPro" id="IPR015273">
    <property type="entry name" value="Cys-tRNA-synt_Ia_DALR"/>
</dbReference>
<dbReference type="InterPro" id="IPR024909">
    <property type="entry name" value="Cys-tRNA/MSH_ligase"/>
</dbReference>
<dbReference type="InterPro" id="IPR014729">
    <property type="entry name" value="Rossmann-like_a/b/a_fold"/>
</dbReference>
<dbReference type="InterPro" id="IPR032678">
    <property type="entry name" value="tRNA-synt_1_cat_dom"/>
</dbReference>
<dbReference type="InterPro" id="IPR009080">
    <property type="entry name" value="tRNAsynth_Ia_anticodon-bd"/>
</dbReference>
<dbReference type="NCBIfam" id="TIGR00435">
    <property type="entry name" value="cysS"/>
    <property type="match status" value="1"/>
</dbReference>
<dbReference type="PANTHER" id="PTHR10890:SF3">
    <property type="entry name" value="CYSTEINE--TRNA LIGASE, CYTOPLASMIC"/>
    <property type="match status" value="1"/>
</dbReference>
<dbReference type="PANTHER" id="PTHR10890">
    <property type="entry name" value="CYSTEINYL-TRNA SYNTHETASE"/>
    <property type="match status" value="1"/>
</dbReference>
<dbReference type="Pfam" id="PF09190">
    <property type="entry name" value="DALR_2"/>
    <property type="match status" value="1"/>
</dbReference>
<dbReference type="Pfam" id="PF01406">
    <property type="entry name" value="tRNA-synt_1e"/>
    <property type="match status" value="1"/>
</dbReference>
<dbReference type="PRINTS" id="PR00983">
    <property type="entry name" value="TRNASYNTHCYS"/>
</dbReference>
<dbReference type="SMART" id="SM00840">
    <property type="entry name" value="DALR_2"/>
    <property type="match status" value="1"/>
</dbReference>
<dbReference type="SUPFAM" id="SSF47323">
    <property type="entry name" value="Anticodon-binding domain of a subclass of class I aminoacyl-tRNA synthetases"/>
    <property type="match status" value="1"/>
</dbReference>
<dbReference type="SUPFAM" id="SSF52374">
    <property type="entry name" value="Nucleotidylyl transferase"/>
    <property type="match status" value="1"/>
</dbReference>
<reference key="1">
    <citation type="submission" date="2008-10" db="EMBL/GenBank/DDBJ databases">
        <title>Genome sequence of Bacillus cereus B4264.</title>
        <authorList>
            <person name="Dodson R.J."/>
            <person name="Durkin A.S."/>
            <person name="Rosovitz M.J."/>
            <person name="Rasko D.A."/>
            <person name="Hoffmaster A."/>
            <person name="Ravel J."/>
            <person name="Sutton G."/>
        </authorList>
    </citation>
    <scope>NUCLEOTIDE SEQUENCE [LARGE SCALE GENOMIC DNA]</scope>
    <source>
        <strain>B4264</strain>
    </source>
</reference>
<organism>
    <name type="scientific">Bacillus cereus (strain B4264)</name>
    <dbReference type="NCBI Taxonomy" id="405532"/>
    <lineage>
        <taxon>Bacteria</taxon>
        <taxon>Bacillati</taxon>
        <taxon>Bacillota</taxon>
        <taxon>Bacilli</taxon>
        <taxon>Bacillales</taxon>
        <taxon>Bacillaceae</taxon>
        <taxon>Bacillus</taxon>
        <taxon>Bacillus cereus group</taxon>
    </lineage>
</organism>
<sequence>MTIHIYNTLTRQKEEFVPLEENKVKMYVCGPTVYNYIHIGNARPPMVFDTVRRYLEYKGYDVQYVSNFTDVDDKLIKAANELGEDVPTIADRFVEAYFEDVTALGCKHATVHPRVTENMDIIIEFIQELVNKGYAYESEGDVYFKTKEFEGYGKLSHQPIADLRHGARIEVGEKKQDPLDFALWKAAKEGEIFWESPWGQGRPGWHIECSAMARKYLGDTIDIHAGGQDLAFPHHENEIAQSEALTGKTFARYWMHNGYININNEKMSKSLGNFILVHDIIKQYDPQLIRFFMLSVHYRHPINFSEELLQSTNNGLERIKTAYGNLKHRMESSTDLTDHNEKWLAEIEKFQTAFEEAMNDDFNTANAITELYNVANHANQYLLEEHTSKVVIEAYVKQLETLFDILGLELSKEELLDEEIEELIQKRIEARKNRDFALSDQIRDDLKERNIILEDTAQGTRWKRG</sequence>
<accession>B7HJ28</accession>
<gene>
    <name evidence="1" type="primary">cysS</name>
    <name type="ordered locus">BCB4264_A0110</name>
</gene>
<feature type="chain" id="PRO_1000199039" description="Cysteine--tRNA ligase">
    <location>
        <begin position="1"/>
        <end position="465"/>
    </location>
</feature>
<feature type="short sequence motif" description="'HIGH' region">
    <location>
        <begin position="31"/>
        <end position="41"/>
    </location>
</feature>
<feature type="short sequence motif" description="'KMSKS' region">
    <location>
        <begin position="266"/>
        <end position="270"/>
    </location>
</feature>
<feature type="binding site" evidence="1">
    <location>
        <position position="29"/>
    </location>
    <ligand>
        <name>Zn(2+)</name>
        <dbReference type="ChEBI" id="CHEBI:29105"/>
    </ligand>
</feature>
<feature type="binding site" evidence="1">
    <location>
        <position position="209"/>
    </location>
    <ligand>
        <name>Zn(2+)</name>
        <dbReference type="ChEBI" id="CHEBI:29105"/>
    </ligand>
</feature>
<feature type="binding site" evidence="1">
    <location>
        <position position="234"/>
    </location>
    <ligand>
        <name>Zn(2+)</name>
        <dbReference type="ChEBI" id="CHEBI:29105"/>
    </ligand>
</feature>
<feature type="binding site" evidence="1">
    <location>
        <position position="238"/>
    </location>
    <ligand>
        <name>Zn(2+)</name>
        <dbReference type="ChEBI" id="CHEBI:29105"/>
    </ligand>
</feature>
<feature type="binding site" evidence="1">
    <location>
        <position position="269"/>
    </location>
    <ligand>
        <name>ATP</name>
        <dbReference type="ChEBI" id="CHEBI:30616"/>
    </ligand>
</feature>
<feature type="modified residue" description="Phosphoserine" evidence="1">
    <location>
        <position position="270"/>
    </location>
</feature>
<comment type="catalytic activity">
    <reaction evidence="1">
        <text>tRNA(Cys) + L-cysteine + ATP = L-cysteinyl-tRNA(Cys) + AMP + diphosphate</text>
        <dbReference type="Rhea" id="RHEA:17773"/>
        <dbReference type="Rhea" id="RHEA-COMP:9661"/>
        <dbReference type="Rhea" id="RHEA-COMP:9679"/>
        <dbReference type="ChEBI" id="CHEBI:30616"/>
        <dbReference type="ChEBI" id="CHEBI:33019"/>
        <dbReference type="ChEBI" id="CHEBI:35235"/>
        <dbReference type="ChEBI" id="CHEBI:78442"/>
        <dbReference type="ChEBI" id="CHEBI:78517"/>
        <dbReference type="ChEBI" id="CHEBI:456215"/>
        <dbReference type="EC" id="6.1.1.16"/>
    </reaction>
</comment>
<comment type="cofactor">
    <cofactor evidence="1">
        <name>Zn(2+)</name>
        <dbReference type="ChEBI" id="CHEBI:29105"/>
    </cofactor>
    <text evidence="1">Binds 1 zinc ion per subunit.</text>
</comment>
<comment type="subunit">
    <text evidence="1">Monomer.</text>
</comment>
<comment type="subcellular location">
    <subcellularLocation>
        <location evidence="1">Cytoplasm</location>
    </subcellularLocation>
</comment>
<comment type="similarity">
    <text evidence="1">Belongs to the class-I aminoacyl-tRNA synthetase family.</text>
</comment>
<evidence type="ECO:0000255" key="1">
    <source>
        <dbReference type="HAMAP-Rule" id="MF_00041"/>
    </source>
</evidence>